<accession>B8FRL6</accession>
<sequence>MATKIRLRRMGAKKNPFYRLIVADSNAPRDGRFIEEIGFYDPTKQPEVLNIDEEKAMKWLATGAQPSDTAKSLLRKAGVLAKYHESKK</sequence>
<gene>
    <name evidence="1" type="primary">rpsP</name>
    <name type="ordered locus">Dhaf_3760</name>
</gene>
<comment type="similarity">
    <text evidence="1">Belongs to the bacterial ribosomal protein bS16 family.</text>
</comment>
<keyword id="KW-0687">Ribonucleoprotein</keyword>
<keyword id="KW-0689">Ribosomal protein</keyword>
<reference key="1">
    <citation type="journal article" date="2012" name="BMC Microbiol.">
        <title>Genome sequence of Desulfitobacterium hafniense DCB-2, a Gram-positive anaerobe capable of dehalogenation and metal reduction.</title>
        <authorList>
            <person name="Kim S.H."/>
            <person name="Harzman C."/>
            <person name="Davis J.K."/>
            <person name="Hutcheson R."/>
            <person name="Broderick J.B."/>
            <person name="Marsh T.L."/>
            <person name="Tiedje J.M."/>
        </authorList>
    </citation>
    <scope>NUCLEOTIDE SEQUENCE [LARGE SCALE GENOMIC DNA]</scope>
    <source>
        <strain>DSM 10664 / DCB-2</strain>
    </source>
</reference>
<feature type="chain" id="PRO_1000196385" description="Small ribosomal subunit protein bS16">
    <location>
        <begin position="1"/>
        <end position="88"/>
    </location>
</feature>
<evidence type="ECO:0000255" key="1">
    <source>
        <dbReference type="HAMAP-Rule" id="MF_00385"/>
    </source>
</evidence>
<evidence type="ECO:0000305" key="2"/>
<name>RS16_DESHD</name>
<protein>
    <recommendedName>
        <fullName evidence="1">Small ribosomal subunit protein bS16</fullName>
    </recommendedName>
    <alternativeName>
        <fullName evidence="2">30S ribosomal protein S16</fullName>
    </alternativeName>
</protein>
<dbReference type="EMBL" id="CP001336">
    <property type="protein sequence ID" value="ACL21776.1"/>
    <property type="molecule type" value="Genomic_DNA"/>
</dbReference>
<dbReference type="RefSeq" id="WP_005813195.1">
    <property type="nucleotide sequence ID" value="NC_011830.1"/>
</dbReference>
<dbReference type="SMR" id="B8FRL6"/>
<dbReference type="KEGG" id="dhd:Dhaf_3760"/>
<dbReference type="HOGENOM" id="CLU_100590_5_0_9"/>
<dbReference type="Proteomes" id="UP000007726">
    <property type="component" value="Chromosome"/>
</dbReference>
<dbReference type="GO" id="GO:0005737">
    <property type="term" value="C:cytoplasm"/>
    <property type="evidence" value="ECO:0007669"/>
    <property type="project" value="UniProtKB-ARBA"/>
</dbReference>
<dbReference type="GO" id="GO:0015935">
    <property type="term" value="C:small ribosomal subunit"/>
    <property type="evidence" value="ECO:0007669"/>
    <property type="project" value="TreeGrafter"/>
</dbReference>
<dbReference type="GO" id="GO:0003735">
    <property type="term" value="F:structural constituent of ribosome"/>
    <property type="evidence" value="ECO:0007669"/>
    <property type="project" value="InterPro"/>
</dbReference>
<dbReference type="GO" id="GO:0006412">
    <property type="term" value="P:translation"/>
    <property type="evidence" value="ECO:0007669"/>
    <property type="project" value="UniProtKB-UniRule"/>
</dbReference>
<dbReference type="Gene3D" id="3.30.1320.10">
    <property type="match status" value="1"/>
</dbReference>
<dbReference type="HAMAP" id="MF_00385">
    <property type="entry name" value="Ribosomal_bS16"/>
    <property type="match status" value="1"/>
</dbReference>
<dbReference type="InterPro" id="IPR000307">
    <property type="entry name" value="Ribosomal_bS16"/>
</dbReference>
<dbReference type="InterPro" id="IPR023803">
    <property type="entry name" value="Ribosomal_bS16_dom_sf"/>
</dbReference>
<dbReference type="NCBIfam" id="TIGR00002">
    <property type="entry name" value="S16"/>
    <property type="match status" value="1"/>
</dbReference>
<dbReference type="PANTHER" id="PTHR12919">
    <property type="entry name" value="30S RIBOSOMAL PROTEIN S16"/>
    <property type="match status" value="1"/>
</dbReference>
<dbReference type="PANTHER" id="PTHR12919:SF20">
    <property type="entry name" value="SMALL RIBOSOMAL SUBUNIT PROTEIN BS16M"/>
    <property type="match status" value="1"/>
</dbReference>
<dbReference type="Pfam" id="PF00886">
    <property type="entry name" value="Ribosomal_S16"/>
    <property type="match status" value="1"/>
</dbReference>
<dbReference type="SUPFAM" id="SSF54565">
    <property type="entry name" value="Ribosomal protein S16"/>
    <property type="match status" value="1"/>
</dbReference>
<proteinExistence type="inferred from homology"/>
<organism>
    <name type="scientific">Desulfitobacterium hafniense (strain DSM 10664 / DCB-2)</name>
    <dbReference type="NCBI Taxonomy" id="272564"/>
    <lineage>
        <taxon>Bacteria</taxon>
        <taxon>Bacillati</taxon>
        <taxon>Bacillota</taxon>
        <taxon>Clostridia</taxon>
        <taxon>Eubacteriales</taxon>
        <taxon>Desulfitobacteriaceae</taxon>
        <taxon>Desulfitobacterium</taxon>
    </lineage>
</organism>